<protein>
    <recommendedName>
        <fullName evidence="1">Argininosuccinate synthase</fullName>
        <ecNumber evidence="1">6.3.4.5</ecNumber>
    </recommendedName>
    <alternativeName>
        <fullName evidence="1">Citrulline--aspartate ligase</fullName>
    </alternativeName>
</protein>
<feature type="chain" id="PRO_1000089040" description="Argininosuccinate synthase">
    <location>
        <begin position="1"/>
        <end position="410"/>
    </location>
</feature>
<feature type="binding site" evidence="1">
    <location>
        <begin position="9"/>
        <end position="17"/>
    </location>
    <ligand>
        <name>ATP</name>
        <dbReference type="ChEBI" id="CHEBI:30616"/>
    </ligand>
</feature>
<feature type="binding site" evidence="1">
    <location>
        <position position="86"/>
    </location>
    <ligand>
        <name>L-citrulline</name>
        <dbReference type="ChEBI" id="CHEBI:57743"/>
    </ligand>
</feature>
<feature type="binding site" evidence="1">
    <location>
        <position position="116"/>
    </location>
    <ligand>
        <name>ATP</name>
        <dbReference type="ChEBI" id="CHEBI:30616"/>
    </ligand>
</feature>
<feature type="binding site" evidence="1">
    <location>
        <position position="118"/>
    </location>
    <ligand>
        <name>L-aspartate</name>
        <dbReference type="ChEBI" id="CHEBI:29991"/>
    </ligand>
</feature>
<feature type="binding site" evidence="1">
    <location>
        <position position="122"/>
    </location>
    <ligand>
        <name>L-aspartate</name>
        <dbReference type="ChEBI" id="CHEBI:29991"/>
    </ligand>
</feature>
<feature type="binding site" evidence="1">
    <location>
        <position position="122"/>
    </location>
    <ligand>
        <name>L-citrulline</name>
        <dbReference type="ChEBI" id="CHEBI:57743"/>
    </ligand>
</feature>
<feature type="binding site" evidence="1">
    <location>
        <position position="123"/>
    </location>
    <ligand>
        <name>L-aspartate</name>
        <dbReference type="ChEBI" id="CHEBI:29991"/>
    </ligand>
</feature>
<feature type="binding site" evidence="1">
    <location>
        <position position="126"/>
    </location>
    <ligand>
        <name>L-citrulline</name>
        <dbReference type="ChEBI" id="CHEBI:57743"/>
    </ligand>
</feature>
<feature type="binding site" evidence="1">
    <location>
        <position position="174"/>
    </location>
    <ligand>
        <name>L-citrulline</name>
        <dbReference type="ChEBI" id="CHEBI:57743"/>
    </ligand>
</feature>
<feature type="binding site" evidence="1">
    <location>
        <position position="259"/>
    </location>
    <ligand>
        <name>L-citrulline</name>
        <dbReference type="ChEBI" id="CHEBI:57743"/>
    </ligand>
</feature>
<feature type="binding site" evidence="1">
    <location>
        <position position="271"/>
    </location>
    <ligand>
        <name>L-citrulline</name>
        <dbReference type="ChEBI" id="CHEBI:57743"/>
    </ligand>
</feature>
<gene>
    <name evidence="1" type="primary">argG</name>
    <name type="ordered locus">LAR_0702</name>
</gene>
<accession>B2G6Y6</accession>
<evidence type="ECO:0000255" key="1">
    <source>
        <dbReference type="HAMAP-Rule" id="MF_00005"/>
    </source>
</evidence>
<dbReference type="EC" id="6.3.4.5" evidence="1"/>
<dbReference type="EMBL" id="AP007281">
    <property type="protein sequence ID" value="BAG25218.1"/>
    <property type="molecule type" value="Genomic_DNA"/>
</dbReference>
<dbReference type="RefSeq" id="WP_011953439.1">
    <property type="nucleotide sequence ID" value="NC_010609.1"/>
</dbReference>
<dbReference type="SMR" id="B2G6Y6"/>
<dbReference type="KEGG" id="lrf:LAR_0702"/>
<dbReference type="HOGENOM" id="CLU_032784_4_2_9"/>
<dbReference type="UniPathway" id="UPA00068">
    <property type="reaction ID" value="UER00113"/>
</dbReference>
<dbReference type="GO" id="GO:0005737">
    <property type="term" value="C:cytoplasm"/>
    <property type="evidence" value="ECO:0007669"/>
    <property type="project" value="UniProtKB-SubCell"/>
</dbReference>
<dbReference type="GO" id="GO:0004055">
    <property type="term" value="F:argininosuccinate synthase activity"/>
    <property type="evidence" value="ECO:0007669"/>
    <property type="project" value="UniProtKB-UniRule"/>
</dbReference>
<dbReference type="GO" id="GO:0005524">
    <property type="term" value="F:ATP binding"/>
    <property type="evidence" value="ECO:0007669"/>
    <property type="project" value="UniProtKB-UniRule"/>
</dbReference>
<dbReference type="GO" id="GO:0000053">
    <property type="term" value="P:argininosuccinate metabolic process"/>
    <property type="evidence" value="ECO:0007669"/>
    <property type="project" value="TreeGrafter"/>
</dbReference>
<dbReference type="GO" id="GO:0006526">
    <property type="term" value="P:L-arginine biosynthetic process"/>
    <property type="evidence" value="ECO:0007669"/>
    <property type="project" value="UniProtKB-UniRule"/>
</dbReference>
<dbReference type="GO" id="GO:0000050">
    <property type="term" value="P:urea cycle"/>
    <property type="evidence" value="ECO:0007669"/>
    <property type="project" value="TreeGrafter"/>
</dbReference>
<dbReference type="CDD" id="cd01999">
    <property type="entry name" value="ASS"/>
    <property type="match status" value="1"/>
</dbReference>
<dbReference type="FunFam" id="3.40.50.620:FF:000038">
    <property type="entry name" value="Argininosuccinate synthase"/>
    <property type="match status" value="1"/>
</dbReference>
<dbReference type="FunFam" id="3.90.1260.10:FF:000007">
    <property type="entry name" value="Argininosuccinate synthase"/>
    <property type="match status" value="1"/>
</dbReference>
<dbReference type="Gene3D" id="3.90.1260.10">
    <property type="entry name" value="Argininosuccinate synthetase, chain A, domain 2"/>
    <property type="match status" value="1"/>
</dbReference>
<dbReference type="Gene3D" id="3.40.50.620">
    <property type="entry name" value="HUPs"/>
    <property type="match status" value="1"/>
</dbReference>
<dbReference type="HAMAP" id="MF_00005">
    <property type="entry name" value="Arg_succ_synth_type1"/>
    <property type="match status" value="1"/>
</dbReference>
<dbReference type="InterPro" id="IPR048268">
    <property type="entry name" value="Arginosuc_syn_C"/>
</dbReference>
<dbReference type="InterPro" id="IPR048267">
    <property type="entry name" value="Arginosuc_syn_N"/>
</dbReference>
<dbReference type="InterPro" id="IPR001518">
    <property type="entry name" value="Arginosuc_synth"/>
</dbReference>
<dbReference type="InterPro" id="IPR018223">
    <property type="entry name" value="Arginosuc_synth_CS"/>
</dbReference>
<dbReference type="InterPro" id="IPR023434">
    <property type="entry name" value="Arginosuc_synth_type_1_subfam"/>
</dbReference>
<dbReference type="InterPro" id="IPR024074">
    <property type="entry name" value="AS_cat/multimer_dom_body"/>
</dbReference>
<dbReference type="InterPro" id="IPR014729">
    <property type="entry name" value="Rossmann-like_a/b/a_fold"/>
</dbReference>
<dbReference type="NCBIfam" id="TIGR00032">
    <property type="entry name" value="argG"/>
    <property type="match status" value="1"/>
</dbReference>
<dbReference type="NCBIfam" id="NF001770">
    <property type="entry name" value="PRK00509.1"/>
    <property type="match status" value="1"/>
</dbReference>
<dbReference type="PANTHER" id="PTHR11587">
    <property type="entry name" value="ARGININOSUCCINATE SYNTHASE"/>
    <property type="match status" value="1"/>
</dbReference>
<dbReference type="PANTHER" id="PTHR11587:SF2">
    <property type="entry name" value="ARGININOSUCCINATE SYNTHASE"/>
    <property type="match status" value="1"/>
</dbReference>
<dbReference type="Pfam" id="PF20979">
    <property type="entry name" value="Arginosuc_syn_C"/>
    <property type="match status" value="1"/>
</dbReference>
<dbReference type="Pfam" id="PF00764">
    <property type="entry name" value="Arginosuc_synth"/>
    <property type="match status" value="1"/>
</dbReference>
<dbReference type="SUPFAM" id="SSF52402">
    <property type="entry name" value="Adenine nucleotide alpha hydrolases-like"/>
    <property type="match status" value="1"/>
</dbReference>
<dbReference type="SUPFAM" id="SSF69864">
    <property type="entry name" value="Argininosuccinate synthetase, C-terminal domain"/>
    <property type="match status" value="1"/>
</dbReference>
<dbReference type="PROSITE" id="PS00564">
    <property type="entry name" value="ARGININOSUCCIN_SYN_1"/>
    <property type="match status" value="1"/>
</dbReference>
<dbReference type="PROSITE" id="PS00565">
    <property type="entry name" value="ARGININOSUCCIN_SYN_2"/>
    <property type="match status" value="1"/>
</dbReference>
<reference key="1">
    <citation type="journal article" date="2008" name="DNA Res.">
        <title>Comparative genome analysis of Lactobacillus reuteri and Lactobacillus fermentum reveal a genomic island for reuterin and cobalamin production.</title>
        <authorList>
            <person name="Morita H."/>
            <person name="Toh H."/>
            <person name="Fukuda S."/>
            <person name="Horikawa H."/>
            <person name="Oshima K."/>
            <person name="Suzuki T."/>
            <person name="Murakami M."/>
            <person name="Hisamatsu S."/>
            <person name="Kato Y."/>
            <person name="Takizawa T."/>
            <person name="Fukuoka H."/>
            <person name="Yoshimura T."/>
            <person name="Itoh K."/>
            <person name="O'Sullivan D.J."/>
            <person name="McKay L.L."/>
            <person name="Ohno H."/>
            <person name="Kikuchi J."/>
            <person name="Masaoka T."/>
            <person name="Hattori M."/>
        </authorList>
    </citation>
    <scope>NUCLEOTIDE SEQUENCE [LARGE SCALE GENOMIC DNA]</scope>
    <source>
        <strain>JCM 1112</strain>
    </source>
</reference>
<organism>
    <name type="scientific">Limosilactobacillus reuteri subsp. reuteri (strain JCM 1112)</name>
    <name type="common">Lactobacillus reuteri</name>
    <dbReference type="NCBI Taxonomy" id="557433"/>
    <lineage>
        <taxon>Bacteria</taxon>
        <taxon>Bacillati</taxon>
        <taxon>Bacillota</taxon>
        <taxon>Bacilli</taxon>
        <taxon>Lactobacillales</taxon>
        <taxon>Lactobacillaceae</taxon>
        <taxon>Limosilactobacillus</taxon>
    </lineage>
</organism>
<keyword id="KW-0028">Amino-acid biosynthesis</keyword>
<keyword id="KW-0055">Arginine biosynthesis</keyword>
<keyword id="KW-0067">ATP-binding</keyword>
<keyword id="KW-0963">Cytoplasm</keyword>
<keyword id="KW-0436">Ligase</keyword>
<keyword id="KW-0547">Nucleotide-binding</keyword>
<sequence>MSKEKIVLAYSGGLDTSVAIAWLKNKGYDVIACCIDVGEGKDLEAIKEKGLQVGAWKSVVIDAKRDFAEQFVLPALQAHAMYEQKYPLVSALSRPLIVQKLVAVANQYGATAIAHGCTGKGNDQVRFEAGIHALAPEMKIEDPIRDWHWSREEEIQYAKDNGIPVPITKASPYSIDENLWGRANECGILEDPWAAAPADAYDRTVSIEEAPDTPTTIEITFNEGVPTAIDGEEMPLDQLIMKLDKLAGSHGIGRIDHVENRLVGIKSREIYECPAATVLLAAHKDLEDLTQEREVAHFKPLIEQKMSGIIYNGLWYSPLMKSLVAFIDESQAVVNGVVRVKLFKGNVICEGRKSPNSLYDKNLATYTSADEFDQEAATGFIKLWELPDKVYAQVQNKNKKKVKENTSDAY</sequence>
<comment type="catalytic activity">
    <reaction evidence="1">
        <text>L-citrulline + L-aspartate + ATP = 2-(N(omega)-L-arginino)succinate + AMP + diphosphate + H(+)</text>
        <dbReference type="Rhea" id="RHEA:10932"/>
        <dbReference type="ChEBI" id="CHEBI:15378"/>
        <dbReference type="ChEBI" id="CHEBI:29991"/>
        <dbReference type="ChEBI" id="CHEBI:30616"/>
        <dbReference type="ChEBI" id="CHEBI:33019"/>
        <dbReference type="ChEBI" id="CHEBI:57472"/>
        <dbReference type="ChEBI" id="CHEBI:57743"/>
        <dbReference type="ChEBI" id="CHEBI:456215"/>
        <dbReference type="EC" id="6.3.4.5"/>
    </reaction>
</comment>
<comment type="pathway">
    <text evidence="1">Amino-acid biosynthesis; L-arginine biosynthesis; L-arginine from L-ornithine and carbamoyl phosphate: step 2/3.</text>
</comment>
<comment type="subunit">
    <text evidence="1">Homotetramer.</text>
</comment>
<comment type="subcellular location">
    <subcellularLocation>
        <location evidence="1">Cytoplasm</location>
    </subcellularLocation>
</comment>
<comment type="similarity">
    <text evidence="1">Belongs to the argininosuccinate synthase family. Type 1 subfamily.</text>
</comment>
<proteinExistence type="inferred from homology"/>
<name>ASSY_LIMRJ</name>